<accession>Q4JUD7</accession>
<proteinExistence type="inferred from homology"/>
<organism>
    <name type="scientific">Corynebacterium jeikeium (strain K411)</name>
    <dbReference type="NCBI Taxonomy" id="306537"/>
    <lineage>
        <taxon>Bacteria</taxon>
        <taxon>Bacillati</taxon>
        <taxon>Actinomycetota</taxon>
        <taxon>Actinomycetes</taxon>
        <taxon>Mycobacteriales</taxon>
        <taxon>Corynebacteriaceae</taxon>
        <taxon>Corynebacterium</taxon>
    </lineage>
</organism>
<reference key="1">
    <citation type="journal article" date="2005" name="J. Bacteriol.">
        <title>Complete genome sequence and analysis of the multiresistant nosocomial pathogen Corynebacterium jeikeium K411, a lipid-requiring bacterium of the human skin flora.</title>
        <authorList>
            <person name="Tauch A."/>
            <person name="Kaiser O."/>
            <person name="Hain T."/>
            <person name="Goesmann A."/>
            <person name="Weisshaar B."/>
            <person name="Albersmeier A."/>
            <person name="Bekel T."/>
            <person name="Bischoff N."/>
            <person name="Brune I."/>
            <person name="Chakraborty T."/>
            <person name="Kalinowski J."/>
            <person name="Meyer F."/>
            <person name="Rupp O."/>
            <person name="Schneiker S."/>
            <person name="Viehoever P."/>
            <person name="Puehler A."/>
        </authorList>
    </citation>
    <scope>NUCLEOTIDE SEQUENCE [LARGE SCALE GENOMIC DNA]</scope>
    <source>
        <strain>K411</strain>
    </source>
</reference>
<gene>
    <name evidence="1" type="primary">mshB</name>
    <name type="ordered locus">jk1397</name>
</gene>
<comment type="function">
    <text evidence="1">Catalyzes the deacetylation of 1D-myo-inositol 2-acetamido-2-deoxy-alpha-D-glucopyranoside (GlcNAc-Ins) in the mycothiol biosynthesis pathway.</text>
</comment>
<comment type="catalytic activity">
    <reaction evidence="1">
        <text>1D-myo-inositol 2-acetamido-2-deoxy-alpha-D-glucopyranoside + H2O = 1D-myo-inositol 2-amino-2-deoxy-alpha-D-glucopyranoside + acetate</text>
        <dbReference type="Rhea" id="RHEA:26180"/>
        <dbReference type="ChEBI" id="CHEBI:15377"/>
        <dbReference type="ChEBI" id="CHEBI:30089"/>
        <dbReference type="ChEBI" id="CHEBI:52442"/>
        <dbReference type="ChEBI" id="CHEBI:58886"/>
        <dbReference type="EC" id="3.5.1.103"/>
    </reaction>
</comment>
<comment type="cofactor">
    <cofactor evidence="1">
        <name>Zn(2+)</name>
        <dbReference type="ChEBI" id="CHEBI:29105"/>
    </cofactor>
    <text evidence="1">Binds 1 zinc ion per subunit.</text>
</comment>
<comment type="similarity">
    <text evidence="1">Belongs to the MshB deacetylase family.</text>
</comment>
<keyword id="KW-0378">Hydrolase</keyword>
<keyword id="KW-0479">Metal-binding</keyword>
<keyword id="KW-1185">Reference proteome</keyword>
<keyword id="KW-0862">Zinc</keyword>
<evidence type="ECO:0000255" key="1">
    <source>
        <dbReference type="HAMAP-Rule" id="MF_01696"/>
    </source>
</evidence>
<sequence>MTSTPAEAKITVMAVHAHPDDETLWTGLALAKARRLGHDVAVVTCTLGEEGEVIGEKYQALVDAQQYEQGTGMLGGYRIAELQRALGALGVQHGPNFLGGCGTWRDSGMEGSESIRHPRAFAREVEPAQDLLDAQVEQLIQQIQSIRPEVILTYAADGGYGHPDHKQAHRIVHEAVQRLSGASAEGAGADVFVPSQVLWCVTEDEKFAKGMQGLEDDPTAVPEGWTLPAAGEIATVPSAEVDLVIHGSAEDVAAKQAAMRAHATQIWVADGTASDVNAQVRESNPPAPSATTLFCLSNLITQPLLDSESYRLGWTAPGVPEDFFARALAEQMV</sequence>
<dbReference type="EC" id="3.5.1.103" evidence="1"/>
<dbReference type="EMBL" id="CR931997">
    <property type="protein sequence ID" value="CAI37570.1"/>
    <property type="molecule type" value="Genomic_DNA"/>
</dbReference>
<dbReference type="RefSeq" id="WP_011273861.1">
    <property type="nucleotide sequence ID" value="NC_007164.1"/>
</dbReference>
<dbReference type="SMR" id="Q4JUD7"/>
<dbReference type="STRING" id="306537.jk1397"/>
<dbReference type="KEGG" id="cjk:jk1397"/>
<dbReference type="PATRIC" id="fig|306537.10.peg.1417"/>
<dbReference type="eggNOG" id="COG2120">
    <property type="taxonomic scope" value="Bacteria"/>
</dbReference>
<dbReference type="HOGENOM" id="CLU_049311_2_1_11"/>
<dbReference type="OrthoDB" id="158614at2"/>
<dbReference type="Proteomes" id="UP000000545">
    <property type="component" value="Chromosome"/>
</dbReference>
<dbReference type="GO" id="GO:0035595">
    <property type="term" value="F:N-acetylglucosaminylinositol deacetylase activity"/>
    <property type="evidence" value="ECO:0007669"/>
    <property type="project" value="UniProtKB-EC"/>
</dbReference>
<dbReference type="GO" id="GO:0008270">
    <property type="term" value="F:zinc ion binding"/>
    <property type="evidence" value="ECO:0007669"/>
    <property type="project" value="UniProtKB-UniRule"/>
</dbReference>
<dbReference type="GO" id="GO:0010125">
    <property type="term" value="P:mycothiol biosynthetic process"/>
    <property type="evidence" value="ECO:0007669"/>
    <property type="project" value="UniProtKB-UniRule"/>
</dbReference>
<dbReference type="Gene3D" id="3.40.50.10320">
    <property type="entry name" value="LmbE-like"/>
    <property type="match status" value="1"/>
</dbReference>
<dbReference type="HAMAP" id="MF_01696">
    <property type="entry name" value="MshB"/>
    <property type="match status" value="1"/>
</dbReference>
<dbReference type="InterPro" id="IPR003737">
    <property type="entry name" value="GlcNAc_PI_deacetylase-related"/>
</dbReference>
<dbReference type="InterPro" id="IPR024078">
    <property type="entry name" value="LmbE-like_dom_sf"/>
</dbReference>
<dbReference type="InterPro" id="IPR017810">
    <property type="entry name" value="Mycothiol_biosynthesis_MshB"/>
</dbReference>
<dbReference type="NCBIfam" id="TIGR03445">
    <property type="entry name" value="mycothiol_MshB"/>
    <property type="match status" value="1"/>
</dbReference>
<dbReference type="PANTHER" id="PTHR12993:SF26">
    <property type="entry name" value="1D-MYO-INOSITOL 2-ACETAMIDO-2-DEOXY-ALPHA-D-GLUCOPYRANOSIDE DEACETYLASE"/>
    <property type="match status" value="1"/>
</dbReference>
<dbReference type="PANTHER" id="PTHR12993">
    <property type="entry name" value="N-ACETYLGLUCOSAMINYL-PHOSPHATIDYLINOSITOL DE-N-ACETYLASE-RELATED"/>
    <property type="match status" value="1"/>
</dbReference>
<dbReference type="Pfam" id="PF02585">
    <property type="entry name" value="PIG-L"/>
    <property type="match status" value="1"/>
</dbReference>
<dbReference type="SUPFAM" id="SSF102588">
    <property type="entry name" value="LmbE-like"/>
    <property type="match status" value="1"/>
</dbReference>
<protein>
    <recommendedName>
        <fullName evidence="1">1D-myo-inositol 2-acetamido-2-deoxy-alpha-D-glucopyranoside deacetylase</fullName>
        <shortName evidence="1">GlcNAc-Ins deacetylase</shortName>
        <ecNumber evidence="1">3.5.1.103</ecNumber>
    </recommendedName>
    <alternativeName>
        <fullName>N-acetyl-1-D-myo-inositol 2-amino-2-deoxy-alpha-D-glucopyranoside deacetylase</fullName>
    </alternativeName>
</protein>
<feature type="chain" id="PRO_0000400180" description="1D-myo-inositol 2-acetamido-2-deoxy-alpha-D-glucopyranoside deacetylase">
    <location>
        <begin position="1"/>
        <end position="333"/>
    </location>
</feature>
<feature type="binding site" evidence="1">
    <location>
        <position position="18"/>
    </location>
    <ligand>
        <name>Zn(2+)</name>
        <dbReference type="ChEBI" id="CHEBI:29105"/>
    </ligand>
</feature>
<feature type="binding site" evidence="1">
    <location>
        <position position="21"/>
    </location>
    <ligand>
        <name>Zn(2+)</name>
        <dbReference type="ChEBI" id="CHEBI:29105"/>
    </ligand>
</feature>
<feature type="binding site" evidence="1">
    <location>
        <position position="165"/>
    </location>
    <ligand>
        <name>Zn(2+)</name>
        <dbReference type="ChEBI" id="CHEBI:29105"/>
    </ligand>
</feature>
<name>MSHB_CORJK</name>